<evidence type="ECO:0000250" key="1"/>
<evidence type="ECO:0000255" key="2"/>
<evidence type="ECO:0000305" key="3"/>
<name>GLPD_STAA3</name>
<dbReference type="EC" id="1.1.5.3"/>
<dbReference type="EMBL" id="CP000255">
    <property type="protein sequence ID" value="ABD21577.1"/>
    <property type="molecule type" value="Genomic_DNA"/>
</dbReference>
<dbReference type="RefSeq" id="WP_001218596.1">
    <property type="nucleotide sequence ID" value="NZ_CP027476.1"/>
</dbReference>
<dbReference type="SMR" id="Q2FHD8"/>
<dbReference type="KEGG" id="saa:SAUSA300_1193"/>
<dbReference type="HOGENOM" id="CLU_015740_5_2_9"/>
<dbReference type="UniPathway" id="UPA00618">
    <property type="reaction ID" value="UER00674"/>
</dbReference>
<dbReference type="Proteomes" id="UP000001939">
    <property type="component" value="Chromosome"/>
</dbReference>
<dbReference type="GO" id="GO:0005737">
    <property type="term" value="C:cytoplasm"/>
    <property type="evidence" value="ECO:0007669"/>
    <property type="project" value="UniProtKB-SubCell"/>
</dbReference>
<dbReference type="GO" id="GO:0004368">
    <property type="term" value="F:glycerol-3-phosphate dehydrogenase (quinone) activity"/>
    <property type="evidence" value="ECO:0007669"/>
    <property type="project" value="UniProtKB-EC"/>
</dbReference>
<dbReference type="GO" id="GO:0019563">
    <property type="term" value="P:glycerol catabolic process"/>
    <property type="evidence" value="ECO:0007669"/>
    <property type="project" value="UniProtKB-UniPathway"/>
</dbReference>
<dbReference type="GO" id="GO:0046168">
    <property type="term" value="P:glycerol-3-phosphate catabolic process"/>
    <property type="evidence" value="ECO:0007669"/>
    <property type="project" value="TreeGrafter"/>
</dbReference>
<dbReference type="Gene3D" id="1.10.8.870">
    <property type="entry name" value="Alpha-glycerophosphate oxidase, cap domain"/>
    <property type="match status" value="1"/>
</dbReference>
<dbReference type="Gene3D" id="3.30.9.10">
    <property type="entry name" value="D-Amino Acid Oxidase, subunit A, domain 2"/>
    <property type="match status" value="1"/>
</dbReference>
<dbReference type="Gene3D" id="3.50.50.60">
    <property type="entry name" value="FAD/NAD(P)-binding domain"/>
    <property type="match status" value="1"/>
</dbReference>
<dbReference type="InterPro" id="IPR031656">
    <property type="entry name" value="DAO_C"/>
</dbReference>
<dbReference type="InterPro" id="IPR038299">
    <property type="entry name" value="DAO_C_sf"/>
</dbReference>
<dbReference type="InterPro" id="IPR006076">
    <property type="entry name" value="FAD-dep_OxRdtase"/>
</dbReference>
<dbReference type="InterPro" id="IPR036188">
    <property type="entry name" value="FAD/NAD-bd_sf"/>
</dbReference>
<dbReference type="InterPro" id="IPR000447">
    <property type="entry name" value="G3P_DH_FAD-dep"/>
</dbReference>
<dbReference type="PANTHER" id="PTHR11985:SF35">
    <property type="entry name" value="ANAEROBIC GLYCEROL-3-PHOSPHATE DEHYDROGENASE SUBUNIT A"/>
    <property type="match status" value="1"/>
</dbReference>
<dbReference type="PANTHER" id="PTHR11985">
    <property type="entry name" value="GLYCEROL-3-PHOSPHATE DEHYDROGENASE"/>
    <property type="match status" value="1"/>
</dbReference>
<dbReference type="Pfam" id="PF01266">
    <property type="entry name" value="DAO"/>
    <property type="match status" value="1"/>
</dbReference>
<dbReference type="Pfam" id="PF16901">
    <property type="entry name" value="DAO_C"/>
    <property type="match status" value="1"/>
</dbReference>
<dbReference type="PRINTS" id="PR01001">
    <property type="entry name" value="FADG3PDH"/>
</dbReference>
<dbReference type="SUPFAM" id="SSF54373">
    <property type="entry name" value="FAD-linked reductases, C-terminal domain"/>
    <property type="match status" value="1"/>
</dbReference>
<dbReference type="SUPFAM" id="SSF51905">
    <property type="entry name" value="FAD/NAD(P)-binding domain"/>
    <property type="match status" value="1"/>
</dbReference>
<dbReference type="PROSITE" id="PS00977">
    <property type="entry name" value="FAD_G3PDH_1"/>
    <property type="match status" value="1"/>
</dbReference>
<dbReference type="PROSITE" id="PS00978">
    <property type="entry name" value="FAD_G3PDH_2"/>
    <property type="match status" value="1"/>
</dbReference>
<comment type="catalytic activity">
    <reaction>
        <text>a quinone + sn-glycerol 3-phosphate = dihydroxyacetone phosphate + a quinol</text>
        <dbReference type="Rhea" id="RHEA:18977"/>
        <dbReference type="ChEBI" id="CHEBI:24646"/>
        <dbReference type="ChEBI" id="CHEBI:57597"/>
        <dbReference type="ChEBI" id="CHEBI:57642"/>
        <dbReference type="ChEBI" id="CHEBI:132124"/>
        <dbReference type="EC" id="1.1.5.3"/>
    </reaction>
</comment>
<comment type="cofactor">
    <cofactor evidence="1">
        <name>FAD</name>
        <dbReference type="ChEBI" id="CHEBI:57692"/>
    </cofactor>
</comment>
<comment type="pathway">
    <text>Polyol metabolism; glycerol degradation via glycerol kinase pathway; glycerone phosphate from sn-glycerol 3-phosphate (aerobic route): step 1/1.</text>
</comment>
<comment type="subcellular location">
    <subcellularLocation>
        <location evidence="1">Cytoplasm</location>
    </subcellularLocation>
</comment>
<comment type="similarity">
    <text evidence="3">Belongs to the FAD-dependent glycerol-3-phosphate dehydrogenase family.</text>
</comment>
<feature type="chain" id="PRO_0000270056" description="Aerobic glycerol-3-phosphate dehydrogenase">
    <location>
        <begin position="1"/>
        <end position="557"/>
    </location>
</feature>
<feature type="binding site" evidence="2">
    <location>
        <begin position="21"/>
        <end position="49"/>
    </location>
    <ligand>
        <name>FAD</name>
        <dbReference type="ChEBI" id="CHEBI:57692"/>
    </ligand>
</feature>
<protein>
    <recommendedName>
        <fullName>Aerobic glycerol-3-phosphate dehydrogenase</fullName>
        <ecNumber>1.1.5.3</ecNumber>
    </recommendedName>
</protein>
<organism>
    <name type="scientific">Staphylococcus aureus (strain USA300)</name>
    <dbReference type="NCBI Taxonomy" id="367830"/>
    <lineage>
        <taxon>Bacteria</taxon>
        <taxon>Bacillati</taxon>
        <taxon>Bacillota</taxon>
        <taxon>Bacilli</taxon>
        <taxon>Bacillales</taxon>
        <taxon>Staphylococcaceae</taxon>
        <taxon>Staphylococcus</taxon>
    </lineage>
</organism>
<keyword id="KW-0963">Cytoplasm</keyword>
<keyword id="KW-0274">FAD</keyword>
<keyword id="KW-0285">Flavoprotein</keyword>
<keyword id="KW-0319">Glycerol metabolism</keyword>
<keyword id="KW-0560">Oxidoreductase</keyword>
<accession>Q2FHD8</accession>
<sequence>MALSTFKREHIKKNLRNDEYDLVIIGGGITGAGIALDASERGMKVALVEMQDFAQGTSSRSTKLVHGGLRYLKQFQIGVVAETGKERAIVYENGPHVTTPEWMLLPMHKGGTFGKFSTSIGLGMYDRLAGVKKSERKKMLSKKETLAKEPLVKKEGLKGGGYYVEYRTDDARLTIEVMKRAAEKGAEIINYTKSEHFTYDKNQQVNGVKVIDKLTNENYTIKAKKVVNAAGPWVDDVRSGDYARNNKKLRLTKGVHVVIDQSKFPLGQAVYFDTEKDGRMIFAIPREGKAYVGTTDTFYDNIKSSPLTTQEDRDYLIDAINYMFPSVNVTDEDIESTWAGIRPLIYEEGKDPSEISRKDEIWEGKSGLLTIAGGKLTGYRHMAQDIVDLVSKRLKKDYGLTFSPCNTKGLAISGGDVGGSKNFDAFVEQKVDVAKGFGIDEDVARRLASKYGSNVDELFNIAQTSQYHDSKLPLEIYVELVYSIQQEMVYKPNDFLVRRSGKMYFNIKDVLDYKDAVIDIMADMLDYSPAQIEAYTEEVEQAIKEAQHGNNQPAVKE</sequence>
<gene>
    <name type="primary">glpD</name>
    <name type="ordered locus">SAUSA300_1193</name>
</gene>
<proteinExistence type="inferred from homology"/>
<reference key="1">
    <citation type="journal article" date="2006" name="Lancet">
        <title>Complete genome sequence of USA300, an epidemic clone of community-acquired meticillin-resistant Staphylococcus aureus.</title>
        <authorList>
            <person name="Diep B.A."/>
            <person name="Gill S.R."/>
            <person name="Chang R.F."/>
            <person name="Phan T.H."/>
            <person name="Chen J.H."/>
            <person name="Davidson M.G."/>
            <person name="Lin F."/>
            <person name="Lin J."/>
            <person name="Carleton H.A."/>
            <person name="Mongodin E.F."/>
            <person name="Sensabaugh G.F."/>
            <person name="Perdreau-Remington F."/>
        </authorList>
    </citation>
    <scope>NUCLEOTIDE SEQUENCE [LARGE SCALE GENOMIC DNA]</scope>
    <source>
        <strain>USA300</strain>
    </source>
</reference>